<sequence length="150" mass="16591">MSQLSRILLLNGPNLNMLGAREPKHYGTLSLAAIEANVQALAAKNNIELECFQANSEEKLIDKIHQSFKKVDFILINPAAFTHTSVALRDALLAVAIPFVEIHLSNIHKREPFRHHSYFSDVAEGVICGLGAKGYECAFEFAVEFLAKKA</sequence>
<keyword id="KW-0028">Amino-acid biosynthesis</keyword>
<keyword id="KW-0057">Aromatic amino acid biosynthesis</keyword>
<keyword id="KW-0456">Lyase</keyword>
<evidence type="ECO:0000255" key="1">
    <source>
        <dbReference type="HAMAP-Rule" id="MF_00169"/>
    </source>
</evidence>
<reference key="1">
    <citation type="journal article" date="2004" name="Nat. Biotechnol.">
        <title>The genome sequence of the capnophilic rumen bacterium Mannheimia succiniciproducens.</title>
        <authorList>
            <person name="Hong S.H."/>
            <person name="Kim J.S."/>
            <person name="Lee S.Y."/>
            <person name="In Y.H."/>
            <person name="Choi S.S."/>
            <person name="Rih J.-K."/>
            <person name="Kim C.H."/>
            <person name="Jeong H."/>
            <person name="Hur C.G."/>
            <person name="Kim J.J."/>
        </authorList>
    </citation>
    <scope>NUCLEOTIDE SEQUENCE [LARGE SCALE GENOMIC DNA]</scope>
    <source>
        <strain>KCTC 0769BP / MBEL55E</strain>
    </source>
</reference>
<feature type="chain" id="PRO_1000023480" description="3-dehydroquinate dehydratase">
    <location>
        <begin position="1"/>
        <end position="150"/>
    </location>
</feature>
<feature type="active site" description="Proton acceptor" evidence="1">
    <location>
        <position position="26"/>
    </location>
</feature>
<feature type="active site" description="Proton donor" evidence="1">
    <location>
        <position position="103"/>
    </location>
</feature>
<feature type="binding site" evidence="1">
    <location>
        <position position="77"/>
    </location>
    <ligand>
        <name>substrate</name>
    </ligand>
</feature>
<feature type="binding site" evidence="1">
    <location>
        <position position="83"/>
    </location>
    <ligand>
        <name>substrate</name>
    </ligand>
</feature>
<feature type="binding site" evidence="1">
    <location>
        <position position="90"/>
    </location>
    <ligand>
        <name>substrate</name>
    </ligand>
</feature>
<feature type="binding site" evidence="1">
    <location>
        <begin position="104"/>
        <end position="105"/>
    </location>
    <ligand>
        <name>substrate</name>
    </ligand>
</feature>
<feature type="binding site" evidence="1">
    <location>
        <position position="114"/>
    </location>
    <ligand>
        <name>substrate</name>
    </ligand>
</feature>
<feature type="site" description="Transition state stabilizer" evidence="1">
    <location>
        <position position="21"/>
    </location>
</feature>
<dbReference type="EC" id="4.2.1.10" evidence="1"/>
<dbReference type="EMBL" id="AE016827">
    <property type="protein sequence ID" value="AAU38397.1"/>
    <property type="molecule type" value="Genomic_DNA"/>
</dbReference>
<dbReference type="RefSeq" id="WP_011200955.1">
    <property type="nucleotide sequence ID" value="NC_006300.1"/>
</dbReference>
<dbReference type="SMR" id="Q65RL3"/>
<dbReference type="STRING" id="221988.MS1790"/>
<dbReference type="KEGG" id="msu:MS1790"/>
<dbReference type="eggNOG" id="COG0757">
    <property type="taxonomic scope" value="Bacteria"/>
</dbReference>
<dbReference type="HOGENOM" id="CLU_090968_1_0_6"/>
<dbReference type="OrthoDB" id="9790793at2"/>
<dbReference type="UniPathway" id="UPA00053">
    <property type="reaction ID" value="UER00086"/>
</dbReference>
<dbReference type="Proteomes" id="UP000000607">
    <property type="component" value="Chromosome"/>
</dbReference>
<dbReference type="GO" id="GO:0003855">
    <property type="term" value="F:3-dehydroquinate dehydratase activity"/>
    <property type="evidence" value="ECO:0007669"/>
    <property type="project" value="UniProtKB-UniRule"/>
</dbReference>
<dbReference type="GO" id="GO:0008652">
    <property type="term" value="P:amino acid biosynthetic process"/>
    <property type="evidence" value="ECO:0007669"/>
    <property type="project" value="UniProtKB-KW"/>
</dbReference>
<dbReference type="GO" id="GO:0009073">
    <property type="term" value="P:aromatic amino acid family biosynthetic process"/>
    <property type="evidence" value="ECO:0007669"/>
    <property type="project" value="UniProtKB-KW"/>
</dbReference>
<dbReference type="GO" id="GO:0009423">
    <property type="term" value="P:chorismate biosynthetic process"/>
    <property type="evidence" value="ECO:0007669"/>
    <property type="project" value="UniProtKB-UniRule"/>
</dbReference>
<dbReference type="GO" id="GO:0019631">
    <property type="term" value="P:quinate catabolic process"/>
    <property type="evidence" value="ECO:0007669"/>
    <property type="project" value="TreeGrafter"/>
</dbReference>
<dbReference type="CDD" id="cd00466">
    <property type="entry name" value="DHQase_II"/>
    <property type="match status" value="1"/>
</dbReference>
<dbReference type="Gene3D" id="3.40.50.9100">
    <property type="entry name" value="Dehydroquinase, class II"/>
    <property type="match status" value="1"/>
</dbReference>
<dbReference type="HAMAP" id="MF_00169">
    <property type="entry name" value="AroQ"/>
    <property type="match status" value="1"/>
</dbReference>
<dbReference type="InterPro" id="IPR001874">
    <property type="entry name" value="DHquinase_II"/>
</dbReference>
<dbReference type="InterPro" id="IPR018509">
    <property type="entry name" value="DHquinase_II_CS"/>
</dbReference>
<dbReference type="InterPro" id="IPR036441">
    <property type="entry name" value="DHquinase_II_sf"/>
</dbReference>
<dbReference type="NCBIfam" id="TIGR01088">
    <property type="entry name" value="aroQ"/>
    <property type="match status" value="1"/>
</dbReference>
<dbReference type="NCBIfam" id="NF003804">
    <property type="entry name" value="PRK05395.1-1"/>
    <property type="match status" value="1"/>
</dbReference>
<dbReference type="NCBIfam" id="NF003805">
    <property type="entry name" value="PRK05395.1-2"/>
    <property type="match status" value="1"/>
</dbReference>
<dbReference type="NCBIfam" id="NF003806">
    <property type="entry name" value="PRK05395.1-3"/>
    <property type="match status" value="1"/>
</dbReference>
<dbReference type="NCBIfam" id="NF003807">
    <property type="entry name" value="PRK05395.1-4"/>
    <property type="match status" value="1"/>
</dbReference>
<dbReference type="PANTHER" id="PTHR21272">
    <property type="entry name" value="CATABOLIC 3-DEHYDROQUINASE"/>
    <property type="match status" value="1"/>
</dbReference>
<dbReference type="PANTHER" id="PTHR21272:SF3">
    <property type="entry name" value="CATABOLIC 3-DEHYDROQUINASE"/>
    <property type="match status" value="1"/>
</dbReference>
<dbReference type="Pfam" id="PF01220">
    <property type="entry name" value="DHquinase_II"/>
    <property type="match status" value="1"/>
</dbReference>
<dbReference type="PIRSF" id="PIRSF001399">
    <property type="entry name" value="DHquinase_II"/>
    <property type="match status" value="1"/>
</dbReference>
<dbReference type="SUPFAM" id="SSF52304">
    <property type="entry name" value="Type II 3-dehydroquinate dehydratase"/>
    <property type="match status" value="1"/>
</dbReference>
<dbReference type="PROSITE" id="PS01029">
    <property type="entry name" value="DEHYDROQUINASE_II"/>
    <property type="match status" value="1"/>
</dbReference>
<gene>
    <name evidence="1" type="primary">aroQ</name>
    <name type="ordered locus">MS1790</name>
</gene>
<protein>
    <recommendedName>
        <fullName evidence="1">3-dehydroquinate dehydratase</fullName>
        <shortName evidence="1">3-dehydroquinase</shortName>
        <ecNumber evidence="1">4.2.1.10</ecNumber>
    </recommendedName>
    <alternativeName>
        <fullName evidence="1">Type II DHQase</fullName>
    </alternativeName>
</protein>
<comment type="function">
    <text evidence="1">Catalyzes a trans-dehydration via an enolate intermediate.</text>
</comment>
<comment type="catalytic activity">
    <reaction evidence="1">
        <text>3-dehydroquinate = 3-dehydroshikimate + H2O</text>
        <dbReference type="Rhea" id="RHEA:21096"/>
        <dbReference type="ChEBI" id="CHEBI:15377"/>
        <dbReference type="ChEBI" id="CHEBI:16630"/>
        <dbReference type="ChEBI" id="CHEBI:32364"/>
        <dbReference type="EC" id="4.2.1.10"/>
    </reaction>
</comment>
<comment type="pathway">
    <text evidence="1">Metabolic intermediate biosynthesis; chorismate biosynthesis; chorismate from D-erythrose 4-phosphate and phosphoenolpyruvate: step 3/7.</text>
</comment>
<comment type="subunit">
    <text evidence="1">Homododecamer.</text>
</comment>
<comment type="similarity">
    <text evidence="1">Belongs to the type-II 3-dehydroquinase family.</text>
</comment>
<name>AROQ_MANSM</name>
<organism>
    <name type="scientific">Mannheimia succiniciproducens (strain KCTC 0769BP / MBEL55E)</name>
    <dbReference type="NCBI Taxonomy" id="221988"/>
    <lineage>
        <taxon>Bacteria</taxon>
        <taxon>Pseudomonadati</taxon>
        <taxon>Pseudomonadota</taxon>
        <taxon>Gammaproteobacteria</taxon>
        <taxon>Pasteurellales</taxon>
        <taxon>Pasteurellaceae</taxon>
        <taxon>Basfia</taxon>
    </lineage>
</organism>
<accession>Q65RL3</accession>
<proteinExistence type="inferred from homology"/>